<comment type="function">
    <text evidence="1">Probably deamidates glutamine residues to glutamate on methyl-accepting chemotaxis receptors (MCPs), playing an important role in chemotaxis.</text>
</comment>
<comment type="catalytic activity">
    <reaction evidence="1">
        <text>L-glutaminyl-[protein] + H2O = L-glutamyl-[protein] + NH4(+)</text>
        <dbReference type="Rhea" id="RHEA:16441"/>
        <dbReference type="Rhea" id="RHEA-COMP:10207"/>
        <dbReference type="Rhea" id="RHEA-COMP:10208"/>
        <dbReference type="ChEBI" id="CHEBI:15377"/>
        <dbReference type="ChEBI" id="CHEBI:28938"/>
        <dbReference type="ChEBI" id="CHEBI:29973"/>
        <dbReference type="ChEBI" id="CHEBI:30011"/>
        <dbReference type="EC" id="3.5.1.44"/>
    </reaction>
</comment>
<comment type="similarity">
    <text evidence="1">Belongs to the CheD family.</text>
</comment>
<proteinExistence type="inferred from homology"/>
<sequence length="165" mass="17142">MSTAQAVKIGIAEMEVVIAPNVIRTCGLGSCVGVVIYDAGKAVAGMAHVMLPHSSMARGGVINAAKYADTAVEALVQLVIAAGGRKGMLKAKLAGGAQMFSFSTVGGDMMRIGARNVEEVKKQLERLHIPVVAEDVGGHSGRTIEFNPQTGVLSIRTAAQEIKEI</sequence>
<keyword id="KW-0145">Chemotaxis</keyword>
<keyword id="KW-0378">Hydrolase</keyword>
<keyword id="KW-1185">Reference proteome</keyword>
<organism>
    <name type="scientific">Geobacillus kaustophilus (strain HTA426)</name>
    <dbReference type="NCBI Taxonomy" id="235909"/>
    <lineage>
        <taxon>Bacteria</taxon>
        <taxon>Bacillati</taxon>
        <taxon>Bacillota</taxon>
        <taxon>Bacilli</taxon>
        <taxon>Bacillales</taxon>
        <taxon>Anoxybacillaceae</taxon>
        <taxon>Geobacillus</taxon>
        <taxon>Geobacillus thermoleovorans group</taxon>
    </lineage>
</organism>
<reference key="1">
    <citation type="journal article" date="2004" name="Nucleic Acids Res.">
        <title>Thermoadaptation trait revealed by the genome sequence of thermophilic Geobacillus kaustophilus.</title>
        <authorList>
            <person name="Takami H."/>
            <person name="Takaki Y."/>
            <person name="Chee G.-J."/>
            <person name="Nishi S."/>
            <person name="Shimamura S."/>
            <person name="Suzuki H."/>
            <person name="Matsui S."/>
            <person name="Uchiyama I."/>
        </authorList>
    </citation>
    <scope>NUCLEOTIDE SEQUENCE [LARGE SCALE GENOMIC DNA]</scope>
    <source>
        <strain>HTA426</strain>
    </source>
</reference>
<protein>
    <recommendedName>
        <fullName evidence="1">Probable chemoreceptor glutamine deamidase CheD</fullName>
        <ecNumber evidence="1">3.5.1.44</ecNumber>
    </recommendedName>
</protein>
<dbReference type="EC" id="3.5.1.44" evidence="1"/>
<dbReference type="EMBL" id="BA000043">
    <property type="protein sequence ID" value="BAD75530.1"/>
    <property type="molecule type" value="Genomic_DNA"/>
</dbReference>
<dbReference type="RefSeq" id="WP_011230745.1">
    <property type="nucleotide sequence ID" value="NC_006510.1"/>
</dbReference>
<dbReference type="SMR" id="Q5L0K6"/>
<dbReference type="STRING" id="235909.GK1245"/>
<dbReference type="KEGG" id="gka:GK1245"/>
<dbReference type="eggNOG" id="COG1871">
    <property type="taxonomic scope" value="Bacteria"/>
</dbReference>
<dbReference type="HOGENOM" id="CLU_087854_2_0_9"/>
<dbReference type="Proteomes" id="UP000001172">
    <property type="component" value="Chromosome"/>
</dbReference>
<dbReference type="GO" id="GO:0050568">
    <property type="term" value="F:protein-glutamine glutaminase activity"/>
    <property type="evidence" value="ECO:0007669"/>
    <property type="project" value="UniProtKB-UniRule"/>
</dbReference>
<dbReference type="GO" id="GO:0006935">
    <property type="term" value="P:chemotaxis"/>
    <property type="evidence" value="ECO:0007669"/>
    <property type="project" value="UniProtKB-UniRule"/>
</dbReference>
<dbReference type="CDD" id="cd16352">
    <property type="entry name" value="CheD"/>
    <property type="match status" value="1"/>
</dbReference>
<dbReference type="Gene3D" id="3.30.1330.200">
    <property type="match status" value="1"/>
</dbReference>
<dbReference type="HAMAP" id="MF_01440">
    <property type="entry name" value="CheD"/>
    <property type="match status" value="1"/>
</dbReference>
<dbReference type="InterPro" id="IPR038592">
    <property type="entry name" value="CheD-like_sf"/>
</dbReference>
<dbReference type="InterPro" id="IPR005659">
    <property type="entry name" value="Chemorcpt_Glu_NH3ase_CheD"/>
</dbReference>
<dbReference type="InterPro" id="IPR011324">
    <property type="entry name" value="Cytotoxic_necrot_fac-like_cat"/>
</dbReference>
<dbReference type="PANTHER" id="PTHR35147">
    <property type="entry name" value="CHEMORECEPTOR GLUTAMINE DEAMIDASE CHED-RELATED"/>
    <property type="match status" value="1"/>
</dbReference>
<dbReference type="PANTHER" id="PTHR35147:SF1">
    <property type="entry name" value="CHEMORECEPTOR GLUTAMINE DEAMIDASE CHED-RELATED"/>
    <property type="match status" value="1"/>
</dbReference>
<dbReference type="Pfam" id="PF03975">
    <property type="entry name" value="CheD"/>
    <property type="match status" value="1"/>
</dbReference>
<dbReference type="SUPFAM" id="SSF64438">
    <property type="entry name" value="CNF1/YfiH-like putative cysteine hydrolases"/>
    <property type="match status" value="1"/>
</dbReference>
<name>CHED_GEOKA</name>
<gene>
    <name evidence="1" type="primary">cheD</name>
    <name type="ordered locus">GK1245</name>
</gene>
<accession>Q5L0K6</accession>
<feature type="chain" id="PRO_0000251032" description="Probable chemoreceptor glutamine deamidase CheD">
    <location>
        <begin position="1"/>
        <end position="165"/>
    </location>
</feature>
<evidence type="ECO:0000255" key="1">
    <source>
        <dbReference type="HAMAP-Rule" id="MF_01440"/>
    </source>
</evidence>